<gene>
    <name evidence="3" type="ORF">ORF086</name>
</gene>
<feature type="propeptide" id="PRO_0000439200" evidence="5">
    <location>
        <begin position="1"/>
        <end position="24"/>
    </location>
</feature>
<feature type="chain" id="PRO_0000439201" description="Major capsid protein" evidence="5">
    <location>
        <begin position="25"/>
        <end position="463"/>
    </location>
</feature>
<organismHost>
    <name type="scientific">Staphylococcus aureus</name>
    <dbReference type="NCBI Taxonomy" id="1280"/>
</organismHost>
<comment type="function">
    <text evidence="5">Assembles to form an icosahedral capsid.</text>
</comment>
<comment type="subcellular location">
    <subcellularLocation>
        <location evidence="1">Virion</location>
    </subcellularLocation>
</comment>
<protein>
    <recommendedName>
        <fullName evidence="2">Major capsid protein</fullName>
    </recommendedName>
    <alternativeName>
        <fullName evidence="4">Major head protein</fullName>
    </alternativeName>
</protein>
<proteinExistence type="evidence at protein level"/>
<dbReference type="EMBL" id="AB853330">
    <property type="protein sequence ID" value="BAO09248.1"/>
    <property type="molecule type" value="Genomic_DNA"/>
</dbReference>
<dbReference type="RefSeq" id="YP_008854220.1">
    <property type="nucleotide sequence ID" value="NC_022920.1"/>
</dbReference>
<dbReference type="SMR" id="V5XVW4"/>
<dbReference type="KEGG" id="vg:17729457"/>
<dbReference type="Proteomes" id="UP000204595">
    <property type="component" value="Genome"/>
</dbReference>
<dbReference type="GO" id="GO:0019028">
    <property type="term" value="C:viral capsid"/>
    <property type="evidence" value="ECO:0007669"/>
    <property type="project" value="UniProtKB-KW"/>
</dbReference>
<reference evidence="6" key="1">
    <citation type="journal article" date="2014" name="Ann. Microbiol.">
        <title>Genomic and phylogenetic traits of Staphylococcus phages S25-3 and S25-4 (family Myoviridae, genus Twort-like viruses).</title>
        <authorList>
            <person name="Takemura-Uchiyama I."/>
            <person name="Uchiyama J."/>
            <person name="Kato S."/>
            <person name="Ujihara T."/>
            <person name="Daibata M."/>
            <person name="Matsuzaki S."/>
        </authorList>
    </citation>
    <scope>NUCLEOTIDE SEQUENCE [GENOMIC DNA]</scope>
</reference>
<reference evidence="4" key="2">
    <citation type="journal article" date="2013" name="FEMS Microbiol. Lett.">
        <title>Evaluating efficacy of bacteriophage therapy against Staphylococcus aureus infections using a silkworm larval infection model.</title>
        <authorList>
            <person name="Takemura-Uchiyama I."/>
            <person name="Uchiyama J."/>
            <person name="Kato S."/>
            <person name="Inoue T."/>
            <person name="Ujihara T."/>
            <person name="Ohara N."/>
            <person name="Daibata M."/>
            <person name="Matsuzaki S."/>
        </authorList>
    </citation>
    <scope>PROTEIN SEQUENCE OF 25-44</scope>
    <scope>SUBCELLULAR LOCATION</scope>
</reference>
<name>CAPSD_BPS25</name>
<accession>V5XVW4</accession>
<accession>P86945</accession>
<keyword id="KW-0167">Capsid protein</keyword>
<keyword id="KW-0903">Direct protein sequencing</keyword>
<keyword id="KW-0946">Virion</keyword>
<sequence>MTIEKNLSDVQQKYADQFQEDVVKSFQTGYGITPDTQIDAGALRREILDDQITMLTWTNEDLIFYRDISRRPAQSTVVKYDQYLRHGNVGHSRFVKEIGVAPVSDPNIRQKTVSMKYVSDTKNMSIASGLVNNIADPSQILTEDAIAVVAKTIEWASFYGDASLTSEVEGEGLEFDGLAKLIDKNNVINAKGNQLTEKHLNEAAVRIGKGFGTATDAYMPIGVHADFVNSILGRQMQLMQDNSGNVNTGYSVNGFYSSRGFIKLHGSTVMENELILDESLQPLPNAPQPAKVTATVETKQKGAFENEEDRAGLSYKVVVNSDDAQSAPSEEVTATVSNVDDGVKLSISVNAMYQQQPQFVSIYRQGKETGMYFLIKRVPVKDAQEDGTIVFVDKNETLPETADVFVGEMSPQVVHLFELLPMMKLPLAQINASITFAVLWYGALALRAPKKWARIKNVRYIAV</sequence>
<organism evidence="2">
    <name type="scientific">Staphylococcus phage S25-3</name>
    <dbReference type="NCBI Taxonomy" id="1041526"/>
    <lineage>
        <taxon>Viruses</taxon>
        <taxon>Duplodnaviria</taxon>
        <taxon>Heunggongvirae</taxon>
        <taxon>Uroviricota</taxon>
        <taxon>Caudoviricetes</taxon>
        <taxon>Herelleviridae</taxon>
        <taxon>Twortvirinae</taxon>
        <taxon>Kayvirus</taxon>
        <taxon>Kayvirus S253</taxon>
    </lineage>
</organism>
<evidence type="ECO:0000269" key="1">
    <source>
    </source>
</evidence>
<evidence type="ECO:0000303" key="2">
    <source>
    </source>
</evidence>
<evidence type="ECO:0000303" key="3">
    <source ref="1"/>
</evidence>
<evidence type="ECO:0000305" key="4"/>
<evidence type="ECO:0000305" key="5">
    <source>
    </source>
</evidence>
<evidence type="ECO:0000312" key="6">
    <source>
        <dbReference type="EMBL" id="BAO09248.1"/>
    </source>
</evidence>